<feature type="chain" id="PRO_0000324549" description="Protein phosphatase 1 regulatory subunit 3B">
    <location>
        <begin position="1"/>
        <end position="301"/>
    </location>
</feature>
<feature type="domain" description="CBM21" evidence="2">
    <location>
        <begin position="142"/>
        <end position="250"/>
    </location>
</feature>
<feature type="short sequence motif" description="PP1-binding motif">
    <location>
        <begin position="79"/>
        <end position="82"/>
    </location>
</feature>
<protein>
    <recommendedName>
        <fullName>Protein phosphatase 1 regulatory subunit 3B</fullName>
    </recommendedName>
</protein>
<keyword id="KW-0119">Carbohydrate metabolism</keyword>
<keyword id="KW-0321">Glycogen metabolism</keyword>
<keyword id="KW-1185">Reference proteome</keyword>
<name>PPR3B_XENTR</name>
<reference key="1">
    <citation type="submission" date="2006-10" db="EMBL/GenBank/DDBJ databases">
        <authorList>
            <consortium name="Sanger Xenopus tropicalis EST/cDNA project"/>
        </authorList>
    </citation>
    <scope>NUCLEOTIDE SEQUENCE [LARGE SCALE MRNA]</scope>
    <source>
        <tissue>Egg</tissue>
    </source>
</reference>
<gene>
    <name type="primary">ppp1r3b</name>
    <name type="ORF">TEgg059n10.1</name>
</gene>
<organism>
    <name type="scientific">Xenopus tropicalis</name>
    <name type="common">Western clawed frog</name>
    <name type="synonym">Silurana tropicalis</name>
    <dbReference type="NCBI Taxonomy" id="8364"/>
    <lineage>
        <taxon>Eukaryota</taxon>
        <taxon>Metazoa</taxon>
        <taxon>Chordata</taxon>
        <taxon>Craniata</taxon>
        <taxon>Vertebrata</taxon>
        <taxon>Euteleostomi</taxon>
        <taxon>Amphibia</taxon>
        <taxon>Batrachia</taxon>
        <taxon>Anura</taxon>
        <taxon>Pipoidea</taxon>
        <taxon>Pipidae</taxon>
        <taxon>Xenopodinae</taxon>
        <taxon>Xenopus</taxon>
        <taxon>Silurana</taxon>
    </lineage>
</organism>
<accession>Q28E28</accession>
<sequence>MPWISSHMNSSSVLDFFPHKTMAVDIAMKFYLRSPPLRRDRVECRIARKSNEPLRPCIQTTNKTLLSELSNQENKVKKRVSFADSRGLALTMVKVYSDFDDELEIPFNISELIDNIVNLTTVEKERFFLDFVQPSADYLDFRNRLQAESVCLENCMLKDKALVGTVKVKNLAFQKSVKIRMTCDSWQTYKDYDCLYVKDTYAGSDKDTFSFDVSLPEGIQSSASIEFAVCFECEGRIFWDSNKGLNYRIVRQDHRIPSDFESRHYDPVCLSVDQYGSPRCSYGIFPELQTYSGFDKLGPYY</sequence>
<dbReference type="EMBL" id="CR848480">
    <property type="protein sequence ID" value="CAJ81364.1"/>
    <property type="molecule type" value="mRNA"/>
</dbReference>
<dbReference type="RefSeq" id="NP_001015950.1">
    <property type="nucleotide sequence ID" value="NM_001015950.2"/>
</dbReference>
<dbReference type="RefSeq" id="XP_012817295.1">
    <property type="nucleotide sequence ID" value="XM_012961841.2"/>
</dbReference>
<dbReference type="RefSeq" id="XP_012817300.1">
    <property type="nucleotide sequence ID" value="XM_012961846.2"/>
</dbReference>
<dbReference type="RefSeq" id="XP_012817303.1">
    <property type="nucleotide sequence ID" value="XM_012961849.2"/>
</dbReference>
<dbReference type="RefSeq" id="XP_012817307.1">
    <property type="nucleotide sequence ID" value="XM_012961853.2"/>
</dbReference>
<dbReference type="RefSeq" id="XP_012817310.1">
    <property type="nucleotide sequence ID" value="XM_012961856.3"/>
</dbReference>
<dbReference type="RefSeq" id="XP_012817313.1">
    <property type="nucleotide sequence ID" value="XM_012961859.3"/>
</dbReference>
<dbReference type="SMR" id="Q28E28"/>
<dbReference type="FunCoup" id="Q28E28">
    <property type="interactions" value="187"/>
</dbReference>
<dbReference type="STRING" id="8364.ENSXETP00000036320"/>
<dbReference type="CAZy" id="CBM21">
    <property type="family name" value="Carbohydrate-Binding Module Family 21"/>
</dbReference>
<dbReference type="PaxDb" id="8364-ENSXETP00000017880"/>
<dbReference type="GeneID" id="548704"/>
<dbReference type="KEGG" id="xtr:548704"/>
<dbReference type="AGR" id="Xenbase:XB-GENE-956777"/>
<dbReference type="CTD" id="79660"/>
<dbReference type="Xenbase" id="XB-GENE-956777">
    <property type="gene designation" value="ppp1r3b"/>
</dbReference>
<dbReference type="eggNOG" id="KOG3986">
    <property type="taxonomic scope" value="Eukaryota"/>
</dbReference>
<dbReference type="HOGENOM" id="CLU_040215_2_1_1"/>
<dbReference type="InParanoid" id="Q28E28"/>
<dbReference type="OMA" id="YRIIQAE"/>
<dbReference type="OrthoDB" id="8942186at2759"/>
<dbReference type="PhylomeDB" id="Q28E28"/>
<dbReference type="TreeFam" id="TF105537"/>
<dbReference type="Proteomes" id="UP000008143">
    <property type="component" value="Chromosome 1"/>
</dbReference>
<dbReference type="Bgee" id="ENSXETG00000008154">
    <property type="expression patterns" value="Expressed in ovary and 12 other cell types or tissues"/>
</dbReference>
<dbReference type="ExpressionAtlas" id="Q28E28">
    <property type="expression patterns" value="baseline"/>
</dbReference>
<dbReference type="GO" id="GO:0000164">
    <property type="term" value="C:protein phosphatase type 1 complex"/>
    <property type="evidence" value="ECO:0007669"/>
    <property type="project" value="InterPro"/>
</dbReference>
<dbReference type="GO" id="GO:0019888">
    <property type="term" value="F:protein phosphatase regulator activity"/>
    <property type="evidence" value="ECO:0007669"/>
    <property type="project" value="InterPro"/>
</dbReference>
<dbReference type="GO" id="GO:0005977">
    <property type="term" value="P:glycogen metabolic process"/>
    <property type="evidence" value="ECO:0007669"/>
    <property type="project" value="UniProtKB-KW"/>
</dbReference>
<dbReference type="GO" id="GO:0005981">
    <property type="term" value="P:regulation of glycogen catabolic process"/>
    <property type="evidence" value="ECO:0007669"/>
    <property type="project" value="InterPro"/>
</dbReference>
<dbReference type="CDD" id="cd22814">
    <property type="entry name" value="PBD_PPP1R3B"/>
    <property type="match status" value="1"/>
</dbReference>
<dbReference type="FunFam" id="2.60.40.2440:FF:000001">
    <property type="entry name" value="Protein phosphatase 1 regulatory subunit 3C"/>
    <property type="match status" value="1"/>
</dbReference>
<dbReference type="Gene3D" id="2.60.40.2440">
    <property type="entry name" value="Carbohydrate binding type-21 domain"/>
    <property type="match status" value="1"/>
</dbReference>
<dbReference type="InterPro" id="IPR005036">
    <property type="entry name" value="CBM21_dom"/>
</dbReference>
<dbReference type="InterPro" id="IPR038175">
    <property type="entry name" value="CBM21_dom_sf"/>
</dbReference>
<dbReference type="InterPro" id="IPR017434">
    <property type="entry name" value="Pase-1_reg-su_3B/C/D_met"/>
</dbReference>
<dbReference type="InterPro" id="IPR030682">
    <property type="entry name" value="PP1_3B"/>
</dbReference>
<dbReference type="InterPro" id="IPR050782">
    <property type="entry name" value="PP1_regulatory_subunit_3"/>
</dbReference>
<dbReference type="PANTHER" id="PTHR12307">
    <property type="entry name" value="PROTEIN PHOSPHATASE 1 REGULATORY SUBUNIT"/>
    <property type="match status" value="1"/>
</dbReference>
<dbReference type="PANTHER" id="PTHR12307:SF13">
    <property type="entry name" value="PROTEIN PHOSPHATASE 1 REGULATORY SUBUNIT 3B"/>
    <property type="match status" value="1"/>
</dbReference>
<dbReference type="Pfam" id="PF03370">
    <property type="entry name" value="CBM_21"/>
    <property type="match status" value="1"/>
</dbReference>
<dbReference type="PIRSF" id="PIRSF500814">
    <property type="entry name" value="PP1_GL"/>
    <property type="match status" value="1"/>
</dbReference>
<dbReference type="PIRSF" id="PIRSF038207">
    <property type="entry name" value="PP1_GT_animal"/>
    <property type="match status" value="1"/>
</dbReference>
<dbReference type="PROSITE" id="PS51159">
    <property type="entry name" value="CBM21"/>
    <property type="match status" value="1"/>
</dbReference>
<proteinExistence type="evidence at transcript level"/>
<evidence type="ECO:0000250" key="1"/>
<evidence type="ECO:0000255" key="2">
    <source>
        <dbReference type="PROSITE-ProRule" id="PRU00491"/>
    </source>
</evidence>
<comment type="function">
    <text evidence="1">Acts as a glycogen-targeting subunit for phosphatase PP1. Facilitates interaction of the PP1 with enzymes of the glycogen metabolism and regulates its activity. Suppresses the rate at which PP1 dephosphorylates (inactivates) glycogen phosphorylase and enhances the rate at which it activates glycogen synthase and therefore limits glycogen breakdown (By similarity).</text>
</comment>
<comment type="subunit">
    <text evidence="1">Interacts with glycogen, PPP1CC catalytic subunit of PP1 and PYGL. Associates with glycogen particles. Forms complexes with debranching enzyme, glycogen phosphorylase, glycogen synthase and phosphorylase kinase which is necessary for its regulation of PP1 activity (By similarity).</text>
</comment>
<comment type="domain">
    <text evidence="1">The N-terminal region is required for binding to PP1, the central region is required for binding to glycogen and the C-terminal region is required for binding to glycogen phosphorylase, glycogen synthase and phosphorylase kinase.</text>
</comment>